<reference key="1">
    <citation type="submission" date="2008-06" db="EMBL/GenBank/DDBJ databases">
        <title>Complete sequence of chromosome of Prosthecochloris aestuarii DSM 271.</title>
        <authorList>
            <consortium name="US DOE Joint Genome Institute"/>
            <person name="Lucas S."/>
            <person name="Copeland A."/>
            <person name="Lapidus A."/>
            <person name="Glavina del Rio T."/>
            <person name="Dalin E."/>
            <person name="Tice H."/>
            <person name="Bruce D."/>
            <person name="Goodwin L."/>
            <person name="Pitluck S."/>
            <person name="Schmutz J."/>
            <person name="Larimer F."/>
            <person name="Land M."/>
            <person name="Hauser L."/>
            <person name="Kyrpides N."/>
            <person name="Anderson I."/>
            <person name="Liu Z."/>
            <person name="Li T."/>
            <person name="Zhao F."/>
            <person name="Overmann J."/>
            <person name="Bryant D.A."/>
            <person name="Richardson P."/>
        </authorList>
    </citation>
    <scope>NUCLEOTIDE SEQUENCE [LARGE SCALE GENOMIC DNA]</scope>
    <source>
        <strain>DSM 271 / SK 413</strain>
    </source>
</reference>
<proteinExistence type="inferred from homology"/>
<gene>
    <name evidence="1" type="primary">pdxA</name>
    <name type="ordered locus">Paes_0718</name>
</gene>
<name>PDXA_PROA2</name>
<sequence length="338" mass="36521">MKTTAWTIGDIHGIGPEIILKTFDESLRSTGQPEEKPIVIGSAEALLYYSKRLGLSIDIRTIDAPEKAAAYPQGVLPVISVGEPSSPLQPGTISAEAGRLSMLAIEKAANLCLEGRCAAMVTAPIHKEAVARAGYPHTGHTDFLADLCATDNPTMLFRDPVSGLMVALATIHVALHRVPELIRSMDMSAFFSNLNRSLQSDFRIEQPRIAVLGLNPHASDGGVMGREEKEIILPCIDALADRQNIEGPFAADGFFGSGKYRNYDVTVAMYHDQGLLPFKVLAFDTGINVTLGLPLVRTSPDHGTSFDIAGQGRASHRSFSEAAKLAWEIAFNRLMEHS</sequence>
<keyword id="KW-0963">Cytoplasm</keyword>
<keyword id="KW-0479">Metal-binding</keyword>
<keyword id="KW-0520">NAD</keyword>
<keyword id="KW-0521">NADP</keyword>
<keyword id="KW-0560">Oxidoreductase</keyword>
<keyword id="KW-0664">Pyridoxine biosynthesis</keyword>
<feature type="chain" id="PRO_1000146492" description="4-hydroxythreonine-4-phosphate dehydrogenase">
    <location>
        <begin position="1"/>
        <end position="338"/>
    </location>
</feature>
<feature type="binding site" evidence="1">
    <location>
        <position position="140"/>
    </location>
    <ligand>
        <name>substrate</name>
    </ligand>
</feature>
<feature type="binding site" evidence="1">
    <location>
        <position position="141"/>
    </location>
    <ligand>
        <name>substrate</name>
    </ligand>
</feature>
<feature type="binding site" evidence="1">
    <location>
        <position position="172"/>
    </location>
    <ligand>
        <name>a divalent metal cation</name>
        <dbReference type="ChEBI" id="CHEBI:60240"/>
        <note>ligand shared between dimeric partners</note>
    </ligand>
</feature>
<feature type="binding site" evidence="1">
    <location>
        <position position="217"/>
    </location>
    <ligand>
        <name>a divalent metal cation</name>
        <dbReference type="ChEBI" id="CHEBI:60240"/>
        <note>ligand shared between dimeric partners</note>
    </ligand>
</feature>
<feature type="binding site" evidence="1">
    <location>
        <position position="271"/>
    </location>
    <ligand>
        <name>a divalent metal cation</name>
        <dbReference type="ChEBI" id="CHEBI:60240"/>
        <note>ligand shared between dimeric partners</note>
    </ligand>
</feature>
<feature type="binding site" evidence="1">
    <location>
        <position position="279"/>
    </location>
    <ligand>
        <name>substrate</name>
    </ligand>
</feature>
<feature type="binding site" evidence="1">
    <location>
        <position position="288"/>
    </location>
    <ligand>
        <name>substrate</name>
    </ligand>
</feature>
<feature type="binding site" evidence="1">
    <location>
        <position position="297"/>
    </location>
    <ligand>
        <name>substrate</name>
    </ligand>
</feature>
<comment type="function">
    <text evidence="1">Catalyzes the NAD(P)-dependent oxidation of 4-(phosphooxy)-L-threonine (HTP) into 2-amino-3-oxo-4-(phosphooxy)butyric acid which spontaneously decarboxylates to form 3-amino-2-oxopropyl phosphate (AHAP).</text>
</comment>
<comment type="catalytic activity">
    <reaction evidence="1">
        <text>4-(phosphooxy)-L-threonine + NAD(+) = 3-amino-2-oxopropyl phosphate + CO2 + NADH</text>
        <dbReference type="Rhea" id="RHEA:32275"/>
        <dbReference type="ChEBI" id="CHEBI:16526"/>
        <dbReference type="ChEBI" id="CHEBI:57279"/>
        <dbReference type="ChEBI" id="CHEBI:57540"/>
        <dbReference type="ChEBI" id="CHEBI:57945"/>
        <dbReference type="ChEBI" id="CHEBI:58452"/>
        <dbReference type="EC" id="1.1.1.262"/>
    </reaction>
</comment>
<comment type="cofactor">
    <cofactor evidence="1">
        <name>a divalent metal cation</name>
        <dbReference type="ChEBI" id="CHEBI:60240"/>
    </cofactor>
    <text evidence="1">Binds 1 divalent metal cation per subunit.</text>
</comment>
<comment type="pathway">
    <text evidence="1">Cofactor biosynthesis; pyridoxine 5'-phosphate biosynthesis; pyridoxine 5'-phosphate from D-erythrose 4-phosphate: step 4/5.</text>
</comment>
<comment type="subunit">
    <text evidence="1">Homodimer.</text>
</comment>
<comment type="subcellular location">
    <subcellularLocation>
        <location evidence="1">Cytoplasm</location>
    </subcellularLocation>
</comment>
<comment type="miscellaneous">
    <text evidence="1">The active site is located at the dimer interface.</text>
</comment>
<comment type="similarity">
    <text evidence="2">Belongs to the PdxA family.</text>
</comment>
<protein>
    <recommendedName>
        <fullName evidence="1">4-hydroxythreonine-4-phosphate dehydrogenase</fullName>
        <ecNumber evidence="1">1.1.1.262</ecNumber>
    </recommendedName>
    <alternativeName>
        <fullName evidence="1">4-(phosphohydroxy)-L-threonine dehydrogenase</fullName>
    </alternativeName>
</protein>
<organism>
    <name type="scientific">Prosthecochloris aestuarii (strain DSM 271 / SK 413)</name>
    <dbReference type="NCBI Taxonomy" id="290512"/>
    <lineage>
        <taxon>Bacteria</taxon>
        <taxon>Pseudomonadati</taxon>
        <taxon>Chlorobiota</taxon>
        <taxon>Chlorobiia</taxon>
        <taxon>Chlorobiales</taxon>
        <taxon>Chlorobiaceae</taxon>
        <taxon>Prosthecochloris</taxon>
    </lineage>
</organism>
<accession>B4S6L0</accession>
<evidence type="ECO:0000250" key="1">
    <source>
        <dbReference type="UniProtKB" id="P19624"/>
    </source>
</evidence>
<evidence type="ECO:0000305" key="2"/>
<dbReference type="EC" id="1.1.1.262" evidence="1"/>
<dbReference type="EMBL" id="CP001108">
    <property type="protein sequence ID" value="ACF45765.1"/>
    <property type="molecule type" value="Genomic_DNA"/>
</dbReference>
<dbReference type="RefSeq" id="WP_012505302.1">
    <property type="nucleotide sequence ID" value="NC_011059.1"/>
</dbReference>
<dbReference type="SMR" id="B4S6L0"/>
<dbReference type="STRING" id="290512.Paes_0718"/>
<dbReference type="KEGG" id="paa:Paes_0718"/>
<dbReference type="eggNOG" id="COG1995">
    <property type="taxonomic scope" value="Bacteria"/>
</dbReference>
<dbReference type="HOGENOM" id="CLU_040168_0_0_10"/>
<dbReference type="UniPathway" id="UPA00244">
    <property type="reaction ID" value="UER00312"/>
</dbReference>
<dbReference type="Proteomes" id="UP000002725">
    <property type="component" value="Chromosome"/>
</dbReference>
<dbReference type="GO" id="GO:0005737">
    <property type="term" value="C:cytoplasm"/>
    <property type="evidence" value="ECO:0007669"/>
    <property type="project" value="UniProtKB-SubCell"/>
</dbReference>
<dbReference type="GO" id="GO:0050570">
    <property type="term" value="F:4-hydroxythreonine-4-phosphate dehydrogenase activity"/>
    <property type="evidence" value="ECO:0007669"/>
    <property type="project" value="UniProtKB-EC"/>
</dbReference>
<dbReference type="GO" id="GO:0046872">
    <property type="term" value="F:metal ion binding"/>
    <property type="evidence" value="ECO:0007669"/>
    <property type="project" value="UniProtKB-KW"/>
</dbReference>
<dbReference type="GO" id="GO:0051287">
    <property type="term" value="F:NAD binding"/>
    <property type="evidence" value="ECO:0007669"/>
    <property type="project" value="InterPro"/>
</dbReference>
<dbReference type="GO" id="GO:0008615">
    <property type="term" value="P:pyridoxine biosynthetic process"/>
    <property type="evidence" value="ECO:0007669"/>
    <property type="project" value="UniProtKB-KW"/>
</dbReference>
<dbReference type="Gene3D" id="3.40.718.10">
    <property type="entry name" value="Isopropylmalate Dehydrogenase"/>
    <property type="match status" value="1"/>
</dbReference>
<dbReference type="InterPro" id="IPR005255">
    <property type="entry name" value="PdxA_fam"/>
</dbReference>
<dbReference type="NCBIfam" id="TIGR00557">
    <property type="entry name" value="pdxA"/>
    <property type="match status" value="1"/>
</dbReference>
<dbReference type="PANTHER" id="PTHR30004">
    <property type="entry name" value="4-HYDROXYTHREONINE-4-PHOSPHATE DEHYDROGENASE"/>
    <property type="match status" value="1"/>
</dbReference>
<dbReference type="PANTHER" id="PTHR30004:SF6">
    <property type="entry name" value="D-THREONATE 4-PHOSPHATE DEHYDROGENASE"/>
    <property type="match status" value="1"/>
</dbReference>
<dbReference type="Pfam" id="PF04166">
    <property type="entry name" value="PdxA"/>
    <property type="match status" value="1"/>
</dbReference>
<dbReference type="SUPFAM" id="SSF53659">
    <property type="entry name" value="Isocitrate/Isopropylmalate dehydrogenase-like"/>
    <property type="match status" value="1"/>
</dbReference>